<protein>
    <recommendedName>
        <fullName evidence="1">Putative N-acetylmannosamine-6-phosphate 2-epimerase</fullName>
        <ecNumber evidence="1">5.1.3.9</ecNumber>
    </recommendedName>
    <alternativeName>
        <fullName evidence="1">ManNAc-6-P epimerase</fullName>
    </alternativeName>
</protein>
<organism>
    <name type="scientific">Yersinia pestis</name>
    <dbReference type="NCBI Taxonomy" id="632"/>
    <lineage>
        <taxon>Bacteria</taxon>
        <taxon>Pseudomonadati</taxon>
        <taxon>Pseudomonadota</taxon>
        <taxon>Gammaproteobacteria</taxon>
        <taxon>Enterobacterales</taxon>
        <taxon>Yersiniaceae</taxon>
        <taxon>Yersinia</taxon>
    </lineage>
</organism>
<evidence type="ECO:0000255" key="1">
    <source>
        <dbReference type="HAMAP-Rule" id="MF_01235"/>
    </source>
</evidence>
<sequence length="233" mass="24459">MSNLSNLRHKLQNGLIASCQPVPGSAMDTPEIVAAMACAALAGGAVGLRIEGISNIQAVRRATDAPIIGIIKRDLPDSEVRITPWLEDIDALSAAGADIIAFDVTCRERPVSVADLYQRARATGCLTMADASNIDDGLLAHHLGIDFIGTTLSGYTQATVPTEPDLALVTQLAQAGCRVIAEGRYHSPALAAAAISAGAYAVTVGSAITRIEHICGWFCDAIKQCETEKLTEY</sequence>
<comment type="function">
    <text evidence="1">Converts N-acetylmannosamine-6-phosphate (ManNAc-6-P) to N-acetylglucosamine-6-phosphate (GlcNAc-6-P).</text>
</comment>
<comment type="catalytic activity">
    <reaction evidence="1">
        <text>an N-acyl-D-glucosamine 6-phosphate = an N-acyl-D-mannosamine 6-phosphate</text>
        <dbReference type="Rhea" id="RHEA:23932"/>
        <dbReference type="ChEBI" id="CHEBI:57599"/>
        <dbReference type="ChEBI" id="CHEBI:57666"/>
        <dbReference type="EC" id="5.1.3.9"/>
    </reaction>
</comment>
<comment type="pathway">
    <text evidence="1">Amino-sugar metabolism; N-acetylneuraminate degradation; D-fructose 6-phosphate from N-acetylneuraminate: step 3/5.</text>
</comment>
<comment type="similarity">
    <text evidence="1">Belongs to the NanE family.</text>
</comment>
<accession>Q8ZCG8</accession>
<accession>Q0WCP5</accession>
<keyword id="KW-0119">Carbohydrate metabolism</keyword>
<keyword id="KW-0413">Isomerase</keyword>
<keyword id="KW-1185">Reference proteome</keyword>
<reference key="1">
    <citation type="journal article" date="2001" name="Nature">
        <title>Genome sequence of Yersinia pestis, the causative agent of plague.</title>
        <authorList>
            <person name="Parkhill J."/>
            <person name="Wren B.W."/>
            <person name="Thomson N.R."/>
            <person name="Titball R.W."/>
            <person name="Holden M.T.G."/>
            <person name="Prentice M.B."/>
            <person name="Sebaihia M."/>
            <person name="James K.D."/>
            <person name="Churcher C.M."/>
            <person name="Mungall K.L."/>
            <person name="Baker S."/>
            <person name="Basham D."/>
            <person name="Bentley S.D."/>
            <person name="Brooks K."/>
            <person name="Cerdeno-Tarraga A.-M."/>
            <person name="Chillingworth T."/>
            <person name="Cronin A."/>
            <person name="Davies R.M."/>
            <person name="Davis P."/>
            <person name="Dougan G."/>
            <person name="Feltwell T."/>
            <person name="Hamlin N."/>
            <person name="Holroyd S."/>
            <person name="Jagels K."/>
            <person name="Karlyshev A.V."/>
            <person name="Leather S."/>
            <person name="Moule S."/>
            <person name="Oyston P.C.F."/>
            <person name="Quail M.A."/>
            <person name="Rutherford K.M."/>
            <person name="Simmonds M."/>
            <person name="Skelton J."/>
            <person name="Stevens K."/>
            <person name="Whitehead S."/>
            <person name="Barrell B.G."/>
        </authorList>
    </citation>
    <scope>NUCLEOTIDE SEQUENCE [LARGE SCALE GENOMIC DNA]</scope>
    <source>
        <strain>CO-92 / Biovar Orientalis</strain>
    </source>
</reference>
<reference key="2">
    <citation type="journal article" date="2002" name="J. Bacteriol.">
        <title>Genome sequence of Yersinia pestis KIM.</title>
        <authorList>
            <person name="Deng W."/>
            <person name="Burland V."/>
            <person name="Plunkett G. III"/>
            <person name="Boutin A."/>
            <person name="Mayhew G.F."/>
            <person name="Liss P."/>
            <person name="Perna N.T."/>
            <person name="Rose D.J."/>
            <person name="Mau B."/>
            <person name="Zhou S."/>
            <person name="Schwartz D.C."/>
            <person name="Fetherston J.D."/>
            <person name="Lindler L.E."/>
            <person name="Brubaker R.R."/>
            <person name="Plano G.V."/>
            <person name="Straley S.C."/>
            <person name="McDonough K.A."/>
            <person name="Nilles M.L."/>
            <person name="Matson J.S."/>
            <person name="Blattner F.R."/>
            <person name="Perry R.D."/>
        </authorList>
    </citation>
    <scope>NUCLEOTIDE SEQUENCE [LARGE SCALE GENOMIC DNA]</scope>
    <source>
        <strain>KIM10+ / Biovar Mediaevalis</strain>
    </source>
</reference>
<reference key="3">
    <citation type="journal article" date="2004" name="DNA Res.">
        <title>Complete genome sequence of Yersinia pestis strain 91001, an isolate avirulent to humans.</title>
        <authorList>
            <person name="Song Y."/>
            <person name="Tong Z."/>
            <person name="Wang J."/>
            <person name="Wang L."/>
            <person name="Guo Z."/>
            <person name="Han Y."/>
            <person name="Zhang J."/>
            <person name="Pei D."/>
            <person name="Zhou D."/>
            <person name="Qin H."/>
            <person name="Pang X."/>
            <person name="Han Y."/>
            <person name="Zhai J."/>
            <person name="Li M."/>
            <person name="Cui B."/>
            <person name="Qi Z."/>
            <person name="Jin L."/>
            <person name="Dai R."/>
            <person name="Chen F."/>
            <person name="Li S."/>
            <person name="Ye C."/>
            <person name="Du Z."/>
            <person name="Lin W."/>
            <person name="Wang J."/>
            <person name="Yu J."/>
            <person name="Yang H."/>
            <person name="Wang J."/>
            <person name="Huang P."/>
            <person name="Yang R."/>
        </authorList>
    </citation>
    <scope>NUCLEOTIDE SEQUENCE [LARGE SCALE GENOMIC DNA]</scope>
    <source>
        <strain>91001 / Biovar Mediaevalis</strain>
    </source>
</reference>
<gene>
    <name evidence="1" type="primary">nanE</name>
    <name type="ordered locus">YPO3023</name>
    <name type="ordered locus">y1459</name>
    <name type="ordered locus">YP_2646</name>
</gene>
<proteinExistence type="inferred from homology"/>
<name>NANE_YERPE</name>
<feature type="chain" id="PRO_0000179821" description="Putative N-acetylmannosamine-6-phosphate 2-epimerase">
    <location>
        <begin position="1"/>
        <end position="233"/>
    </location>
</feature>
<dbReference type="EC" id="5.1.3.9" evidence="1"/>
<dbReference type="EMBL" id="AL590842">
    <property type="protein sequence ID" value="CAL21625.1"/>
    <property type="molecule type" value="Genomic_DNA"/>
</dbReference>
<dbReference type="EMBL" id="AE009952">
    <property type="protein sequence ID" value="AAM85030.1"/>
    <property type="molecule type" value="Genomic_DNA"/>
</dbReference>
<dbReference type="EMBL" id="AE017042">
    <property type="protein sequence ID" value="AAS62838.1"/>
    <property type="molecule type" value="Genomic_DNA"/>
</dbReference>
<dbReference type="PIR" id="AF0367">
    <property type="entry name" value="AF0367"/>
</dbReference>
<dbReference type="RefSeq" id="YP_002347943.1">
    <property type="nucleotide sequence ID" value="NC_003143.1"/>
</dbReference>
<dbReference type="SMR" id="Q8ZCG8"/>
<dbReference type="STRING" id="214092.YPO3023"/>
<dbReference type="PaxDb" id="214092-YPO3023"/>
<dbReference type="DNASU" id="1146406"/>
<dbReference type="EnsemblBacteria" id="AAS62838">
    <property type="protein sequence ID" value="AAS62838"/>
    <property type="gene ID" value="YP_2646"/>
</dbReference>
<dbReference type="KEGG" id="ype:YPO3023"/>
<dbReference type="KEGG" id="ypk:y1459"/>
<dbReference type="KEGG" id="ypm:YP_2646"/>
<dbReference type="PATRIC" id="fig|214092.21.peg.3476"/>
<dbReference type="eggNOG" id="COG3010">
    <property type="taxonomic scope" value="Bacteria"/>
</dbReference>
<dbReference type="HOGENOM" id="CLU_086300_0_0_6"/>
<dbReference type="OMA" id="TRPMEIT"/>
<dbReference type="OrthoDB" id="9810372at2"/>
<dbReference type="UniPathway" id="UPA00629">
    <property type="reaction ID" value="UER00682"/>
</dbReference>
<dbReference type="Proteomes" id="UP000000815">
    <property type="component" value="Chromosome"/>
</dbReference>
<dbReference type="Proteomes" id="UP000001019">
    <property type="component" value="Chromosome"/>
</dbReference>
<dbReference type="Proteomes" id="UP000002490">
    <property type="component" value="Chromosome"/>
</dbReference>
<dbReference type="GO" id="GO:0005829">
    <property type="term" value="C:cytosol"/>
    <property type="evidence" value="ECO:0000318"/>
    <property type="project" value="GO_Central"/>
</dbReference>
<dbReference type="GO" id="GO:0047465">
    <property type="term" value="F:N-acylglucosamine-6-phosphate 2-epimerase activity"/>
    <property type="evidence" value="ECO:0007669"/>
    <property type="project" value="UniProtKB-EC"/>
</dbReference>
<dbReference type="GO" id="GO:0005975">
    <property type="term" value="P:carbohydrate metabolic process"/>
    <property type="evidence" value="ECO:0007669"/>
    <property type="project" value="UniProtKB-UniRule"/>
</dbReference>
<dbReference type="GO" id="GO:0006053">
    <property type="term" value="P:N-acetylmannosamine catabolic process"/>
    <property type="evidence" value="ECO:0000318"/>
    <property type="project" value="GO_Central"/>
</dbReference>
<dbReference type="GO" id="GO:0019262">
    <property type="term" value="P:N-acetylneuraminate catabolic process"/>
    <property type="evidence" value="ECO:0000318"/>
    <property type="project" value="GO_Central"/>
</dbReference>
<dbReference type="CDD" id="cd04729">
    <property type="entry name" value="NanE"/>
    <property type="match status" value="1"/>
</dbReference>
<dbReference type="FunFam" id="3.20.20.70:FF:000035">
    <property type="entry name" value="Putative N-acetylmannosamine-6-phosphate 2-epimerase"/>
    <property type="match status" value="1"/>
</dbReference>
<dbReference type="Gene3D" id="3.20.20.70">
    <property type="entry name" value="Aldolase class I"/>
    <property type="match status" value="1"/>
</dbReference>
<dbReference type="HAMAP" id="MF_01235">
    <property type="entry name" value="ManNAc6P_epimer"/>
    <property type="match status" value="1"/>
</dbReference>
<dbReference type="InterPro" id="IPR013785">
    <property type="entry name" value="Aldolase_TIM"/>
</dbReference>
<dbReference type="InterPro" id="IPR007260">
    <property type="entry name" value="NanE"/>
</dbReference>
<dbReference type="InterPro" id="IPR011060">
    <property type="entry name" value="RibuloseP-bd_barrel"/>
</dbReference>
<dbReference type="NCBIfam" id="NF002231">
    <property type="entry name" value="PRK01130.1"/>
    <property type="match status" value="1"/>
</dbReference>
<dbReference type="PANTHER" id="PTHR36204">
    <property type="entry name" value="N-ACETYLMANNOSAMINE-6-PHOSPHATE 2-EPIMERASE-RELATED"/>
    <property type="match status" value="1"/>
</dbReference>
<dbReference type="PANTHER" id="PTHR36204:SF1">
    <property type="entry name" value="N-ACETYLMANNOSAMINE-6-PHOSPHATE 2-EPIMERASE-RELATED"/>
    <property type="match status" value="1"/>
</dbReference>
<dbReference type="Pfam" id="PF04131">
    <property type="entry name" value="NanE"/>
    <property type="match status" value="1"/>
</dbReference>
<dbReference type="SUPFAM" id="SSF51366">
    <property type="entry name" value="Ribulose-phoshate binding barrel"/>
    <property type="match status" value="1"/>
</dbReference>